<evidence type="ECO:0000250" key="1"/>
<evidence type="ECO:0000305" key="2"/>
<evidence type="ECO:0007829" key="3">
    <source>
        <dbReference type="PDB" id="1GBS"/>
    </source>
</evidence>
<sequence length="185" mass="20400">RTDCYGNVNRIDTTGASCKTAKPEGLSYCGVPASKTIAERDLKAMDRYKTIIKKVGEKLCVEPAVIAGIISRESHAGKVLKNGWGDRGNGFGLMQVDKRSHKPQGTWNGEVHITQGTTILTDFIKRIQKKFPSWTKDQQLKGGISAYNAGAGNVRSYARMDIGTTHDDYANDVVARAQYYKQHGY</sequence>
<accession>P00717</accession>
<organism>
    <name type="scientific">Cygnus atratus</name>
    <name type="common">Black swan</name>
    <name type="synonym">Anas atrata</name>
    <dbReference type="NCBI Taxonomy" id="8868"/>
    <lineage>
        <taxon>Eukaryota</taxon>
        <taxon>Metazoa</taxon>
        <taxon>Chordata</taxon>
        <taxon>Craniata</taxon>
        <taxon>Vertebrata</taxon>
        <taxon>Euteleostomi</taxon>
        <taxon>Archelosauria</taxon>
        <taxon>Archosauria</taxon>
        <taxon>Dinosauria</taxon>
        <taxon>Saurischia</taxon>
        <taxon>Theropoda</taxon>
        <taxon>Coelurosauria</taxon>
        <taxon>Aves</taxon>
        <taxon>Neognathae</taxon>
        <taxon>Galloanserae</taxon>
        <taxon>Anseriformes</taxon>
        <taxon>Anatidae</taxon>
        <taxon>Anserinae</taxon>
        <taxon>Cygnus</taxon>
    </lineage>
</organism>
<comment type="catalytic activity">
    <reaction>
        <text>Hydrolysis of (1-&gt;4)-beta-linkages between N-acetylmuramic acid and N-acetyl-D-glucosamine residues in a peptidoglycan and between N-acetyl-D-glucosamine residues in chitodextrins.</text>
        <dbReference type="EC" id="3.2.1.17"/>
    </reaction>
</comment>
<comment type="subcellular location">
    <subcellularLocation>
        <location>Secreted</location>
    </subcellularLocation>
</comment>
<comment type="miscellaneous">
    <text>Shows preference for N-acetylmuramic acid residues that are substituted with a peptide moiety. It acts only as a glycanohydrolase.</text>
</comment>
<comment type="similarity">
    <text evidence="2">Belongs to the glycosyl hydrolase 23 family.</text>
</comment>
<name>LYG_CYGAT</name>
<protein>
    <recommendedName>
        <fullName>Lysozyme g</fullName>
        <ecNumber>3.2.1.17</ecNumber>
    </recommendedName>
    <alternativeName>
        <fullName>1,4-beta-N-acetylmuramidase</fullName>
    </alternativeName>
    <alternativeName>
        <fullName>Goose-type lysozyme</fullName>
    </alternativeName>
</protein>
<feature type="chain" id="PRO_0000193515" description="Lysozyme g">
    <location>
        <begin position="1"/>
        <end position="185"/>
    </location>
</feature>
<feature type="active site" evidence="1">
    <location>
        <position position="73"/>
    </location>
</feature>
<feature type="disulfide bond">
    <location>
        <begin position="4"/>
        <end position="60"/>
    </location>
</feature>
<feature type="disulfide bond">
    <location>
        <begin position="18"/>
        <end position="29"/>
    </location>
</feature>
<feature type="helix" evidence="3">
    <location>
        <begin position="8"/>
        <end position="10"/>
    </location>
</feature>
<feature type="helix" evidence="3">
    <location>
        <begin position="18"/>
        <end position="21"/>
    </location>
</feature>
<feature type="helix" evidence="3">
    <location>
        <begin position="22"/>
        <end position="24"/>
    </location>
</feature>
<feature type="helix" evidence="3">
    <location>
        <begin position="30"/>
        <end position="46"/>
    </location>
</feature>
<feature type="helix" evidence="3">
    <location>
        <begin position="49"/>
        <end position="59"/>
    </location>
</feature>
<feature type="helix" evidence="3">
    <location>
        <begin position="63"/>
        <end position="74"/>
    </location>
</feature>
<feature type="helix" evidence="3">
    <location>
        <begin position="75"/>
        <end position="77"/>
    </location>
</feature>
<feature type="turn" evidence="3">
    <location>
        <begin position="92"/>
        <end position="95"/>
    </location>
</feature>
<feature type="turn" evidence="3">
    <location>
        <begin position="98"/>
        <end position="100"/>
    </location>
</feature>
<feature type="helix" evidence="3">
    <location>
        <begin position="110"/>
        <end position="130"/>
    </location>
</feature>
<feature type="helix" evidence="3">
    <location>
        <begin position="136"/>
        <end position="149"/>
    </location>
</feature>
<feature type="helix" evidence="3">
    <location>
        <begin position="151"/>
        <end position="153"/>
    </location>
</feature>
<feature type="turn" evidence="3">
    <location>
        <begin position="158"/>
        <end position="163"/>
    </location>
</feature>
<feature type="helix" evidence="3">
    <location>
        <begin position="165"/>
        <end position="167"/>
    </location>
</feature>
<feature type="helix" evidence="3">
    <location>
        <begin position="169"/>
        <end position="181"/>
    </location>
</feature>
<feature type="turn" evidence="3">
    <location>
        <begin position="182"/>
        <end position="184"/>
    </location>
</feature>
<dbReference type="EC" id="3.2.1.17"/>
<dbReference type="PIR" id="A00872">
    <property type="entry name" value="LZWSG"/>
</dbReference>
<dbReference type="PDB" id="1GBS">
    <property type="method" value="X-ray"/>
    <property type="resolution" value="1.50 A"/>
    <property type="chains" value="A=1-185"/>
</dbReference>
<dbReference type="PDB" id="1LSP">
    <property type="method" value="X-ray"/>
    <property type="resolution" value="2.45 A"/>
    <property type="chains" value="A=1-185"/>
</dbReference>
<dbReference type="PDBsum" id="1GBS"/>
<dbReference type="PDBsum" id="1LSP"/>
<dbReference type="SMR" id="P00717"/>
<dbReference type="CAZy" id="GH23">
    <property type="family name" value="Glycoside Hydrolase Family 23"/>
</dbReference>
<dbReference type="EvolutionaryTrace" id="P00717"/>
<dbReference type="GO" id="GO:0005576">
    <property type="term" value="C:extracellular region"/>
    <property type="evidence" value="ECO:0007669"/>
    <property type="project" value="UniProtKB-SubCell"/>
</dbReference>
<dbReference type="GO" id="GO:0003796">
    <property type="term" value="F:lysozyme activity"/>
    <property type="evidence" value="ECO:0007669"/>
    <property type="project" value="UniProtKB-EC"/>
</dbReference>
<dbReference type="GO" id="GO:0050830">
    <property type="term" value="P:defense response to Gram-positive bacterium"/>
    <property type="evidence" value="ECO:0007669"/>
    <property type="project" value="TreeGrafter"/>
</dbReference>
<dbReference type="GO" id="GO:0031640">
    <property type="term" value="P:killing of cells of another organism"/>
    <property type="evidence" value="ECO:0007669"/>
    <property type="project" value="UniProtKB-KW"/>
</dbReference>
<dbReference type="GO" id="GO:0009253">
    <property type="term" value="P:peptidoglycan catabolic process"/>
    <property type="evidence" value="ECO:0007669"/>
    <property type="project" value="InterPro"/>
</dbReference>
<dbReference type="CDD" id="cd01021">
    <property type="entry name" value="GEWL"/>
    <property type="match status" value="1"/>
</dbReference>
<dbReference type="FunFam" id="1.10.530.10:FF:000026">
    <property type="entry name" value="Lysozyme g"/>
    <property type="match status" value="1"/>
</dbReference>
<dbReference type="Gene3D" id="1.10.530.10">
    <property type="match status" value="1"/>
</dbReference>
<dbReference type="InterPro" id="IPR002152">
    <property type="entry name" value="Glyco_hydro_23"/>
</dbReference>
<dbReference type="InterPro" id="IPR023346">
    <property type="entry name" value="Lysozyme-like_dom_sf"/>
</dbReference>
<dbReference type="InterPro" id="IPR008258">
    <property type="entry name" value="Transglycosylase_SLT_dom_1"/>
</dbReference>
<dbReference type="PANTHER" id="PTHR31698">
    <property type="entry name" value="LYSOZYME G FAMILY MEMBER"/>
    <property type="match status" value="1"/>
</dbReference>
<dbReference type="PANTHER" id="PTHR31698:SF8">
    <property type="entry name" value="LYSOZYME G-RELATED"/>
    <property type="match status" value="1"/>
</dbReference>
<dbReference type="Pfam" id="PF01464">
    <property type="entry name" value="SLT"/>
    <property type="match status" value="1"/>
</dbReference>
<dbReference type="PIRSF" id="PIRSF001065">
    <property type="entry name" value="Lysozyme_g"/>
    <property type="match status" value="1"/>
</dbReference>
<dbReference type="PRINTS" id="PR00749">
    <property type="entry name" value="LYSOZYMEG"/>
</dbReference>
<dbReference type="SUPFAM" id="SSF53955">
    <property type="entry name" value="Lysozyme-like"/>
    <property type="match status" value="1"/>
</dbReference>
<reference key="1">
    <citation type="journal article" date="1980" name="Biochemistry">
        <title>Complete amino acid sequence of the goose-type lysozyme from the egg white of the black swan.</title>
        <authorList>
            <person name="Simpson R.J."/>
            <person name="Begg G.S."/>
            <person name="Dorow D.S."/>
            <person name="Morgan F.J."/>
        </authorList>
    </citation>
    <scope>PROTEIN SEQUENCE</scope>
    <source>
        <tissue>Egg white</tissue>
    </source>
</reference>
<reference key="2">
    <citation type="journal article" date="1990" name="Biochem. Biophys. Res. Commun.">
        <title>Internal amino acid sequencing of proteins by in situ cyanogen bromide cleavage in polyacrylamide gels.</title>
        <authorList>
            <person name="Jahnen W."/>
            <person name="Ward L.D."/>
            <person name="Reid G.E."/>
            <person name="Moritz R.L."/>
            <person name="Simpson R.J."/>
        </authorList>
    </citation>
    <scope>PROTEIN SEQUENCE OF 46-68 AND 95-111</scope>
</reference>
<reference key="3">
    <citation type="journal article" date="1995" name="Acta Crystallogr. D">
        <title>A strategy for rapid and effective refinement applied to black swan lysozyme.</title>
        <authorList>
            <person name="Zao Z."/>
            <person name="Esnouf R."/>
            <person name="Isaacs N."/>
            <person name="Stuart D."/>
        </authorList>
    </citation>
    <scope>X-RAY CRYSTALLOGRAPHY (1.9 ANGSTROMS)</scope>
</reference>
<reference key="4">
    <citation type="journal article" date="1996" name="Acta Crystallogr. D">
        <title>Structure of a bulgecin-inhibited g-type lysozyme from the egg white of the Australian black swan. A comparison of the binding of bulgecin to three muramidases.</title>
        <authorList>
            <person name="Karlsen S."/>
            <person name="Hough E."/>
            <person name="Rao Z.H."/>
            <person name="Isaacs N.W."/>
        </authorList>
    </citation>
    <scope>X-RAY CRYSTALLOGRAPHY (2.45 ANGSTROMS)</scope>
</reference>
<keyword id="KW-0002">3D-structure</keyword>
<keyword id="KW-0929">Antimicrobial</keyword>
<keyword id="KW-0081">Bacteriolytic enzyme</keyword>
<keyword id="KW-0903">Direct protein sequencing</keyword>
<keyword id="KW-1015">Disulfide bond</keyword>
<keyword id="KW-0326">Glycosidase</keyword>
<keyword id="KW-0378">Hydrolase</keyword>
<keyword id="KW-0964">Secreted</keyword>
<proteinExistence type="evidence at protein level"/>